<sequence length="208" mass="22889">MELKVINTAGAETGEVISLDDKVFAAKVSEHAVYLDVKSLLANKRQGTHKVKNRSEVRGGGKKPYRQKGTGHARQGSSRSGLMSGGGSIFGPQPHGYDLKVNRKIKRLARRSALSSKAGEGRIIVIEDFTFEQIKTRQFADILKNLGLDQKKTLVLLPEHNEIINRSGRNIPVLNIRVADQASTYDILDCQTVVMQKAAVKKIEETLA</sequence>
<dbReference type="EMBL" id="CP001108">
    <property type="protein sequence ID" value="ACF47073.1"/>
    <property type="molecule type" value="Genomic_DNA"/>
</dbReference>
<dbReference type="RefSeq" id="WP_012506605.1">
    <property type="nucleotide sequence ID" value="NC_011059.1"/>
</dbReference>
<dbReference type="SMR" id="B4S5M6"/>
<dbReference type="STRING" id="290512.Paes_2063"/>
<dbReference type="KEGG" id="paa:Paes_2063"/>
<dbReference type="eggNOG" id="COG0088">
    <property type="taxonomic scope" value="Bacteria"/>
</dbReference>
<dbReference type="HOGENOM" id="CLU_041575_5_2_10"/>
<dbReference type="Proteomes" id="UP000002725">
    <property type="component" value="Chromosome"/>
</dbReference>
<dbReference type="GO" id="GO:1990904">
    <property type="term" value="C:ribonucleoprotein complex"/>
    <property type="evidence" value="ECO:0007669"/>
    <property type="project" value="UniProtKB-KW"/>
</dbReference>
<dbReference type="GO" id="GO:0005840">
    <property type="term" value="C:ribosome"/>
    <property type="evidence" value="ECO:0007669"/>
    <property type="project" value="UniProtKB-KW"/>
</dbReference>
<dbReference type="GO" id="GO:0019843">
    <property type="term" value="F:rRNA binding"/>
    <property type="evidence" value="ECO:0007669"/>
    <property type="project" value="UniProtKB-UniRule"/>
</dbReference>
<dbReference type="GO" id="GO:0003735">
    <property type="term" value="F:structural constituent of ribosome"/>
    <property type="evidence" value="ECO:0007669"/>
    <property type="project" value="InterPro"/>
</dbReference>
<dbReference type="GO" id="GO:0006412">
    <property type="term" value="P:translation"/>
    <property type="evidence" value="ECO:0007669"/>
    <property type="project" value="UniProtKB-UniRule"/>
</dbReference>
<dbReference type="Gene3D" id="3.40.1370.10">
    <property type="match status" value="1"/>
</dbReference>
<dbReference type="HAMAP" id="MF_01328_B">
    <property type="entry name" value="Ribosomal_uL4_B"/>
    <property type="match status" value="1"/>
</dbReference>
<dbReference type="InterPro" id="IPR002136">
    <property type="entry name" value="Ribosomal_uL4"/>
</dbReference>
<dbReference type="InterPro" id="IPR013005">
    <property type="entry name" value="Ribosomal_uL4-like"/>
</dbReference>
<dbReference type="InterPro" id="IPR023574">
    <property type="entry name" value="Ribosomal_uL4_dom_sf"/>
</dbReference>
<dbReference type="NCBIfam" id="TIGR03953">
    <property type="entry name" value="rplD_bact"/>
    <property type="match status" value="1"/>
</dbReference>
<dbReference type="PANTHER" id="PTHR10746">
    <property type="entry name" value="50S RIBOSOMAL PROTEIN L4"/>
    <property type="match status" value="1"/>
</dbReference>
<dbReference type="PANTHER" id="PTHR10746:SF6">
    <property type="entry name" value="LARGE RIBOSOMAL SUBUNIT PROTEIN UL4M"/>
    <property type="match status" value="1"/>
</dbReference>
<dbReference type="Pfam" id="PF00573">
    <property type="entry name" value="Ribosomal_L4"/>
    <property type="match status" value="1"/>
</dbReference>
<dbReference type="SUPFAM" id="SSF52166">
    <property type="entry name" value="Ribosomal protein L4"/>
    <property type="match status" value="1"/>
</dbReference>
<accession>B4S5M6</accession>
<name>RL4_PROA2</name>
<protein>
    <recommendedName>
        <fullName evidence="1">Large ribosomal subunit protein uL4</fullName>
    </recommendedName>
    <alternativeName>
        <fullName evidence="3">50S ribosomal protein L4</fullName>
    </alternativeName>
</protein>
<gene>
    <name evidence="1" type="primary">rplD</name>
    <name type="ordered locus">Paes_2063</name>
</gene>
<keyword id="KW-0687">Ribonucleoprotein</keyword>
<keyword id="KW-0689">Ribosomal protein</keyword>
<keyword id="KW-0694">RNA-binding</keyword>
<keyword id="KW-0699">rRNA-binding</keyword>
<proteinExistence type="inferred from homology"/>
<reference key="1">
    <citation type="submission" date="2008-06" db="EMBL/GenBank/DDBJ databases">
        <title>Complete sequence of chromosome of Prosthecochloris aestuarii DSM 271.</title>
        <authorList>
            <consortium name="US DOE Joint Genome Institute"/>
            <person name="Lucas S."/>
            <person name="Copeland A."/>
            <person name="Lapidus A."/>
            <person name="Glavina del Rio T."/>
            <person name="Dalin E."/>
            <person name="Tice H."/>
            <person name="Bruce D."/>
            <person name="Goodwin L."/>
            <person name="Pitluck S."/>
            <person name="Schmutz J."/>
            <person name="Larimer F."/>
            <person name="Land M."/>
            <person name="Hauser L."/>
            <person name="Kyrpides N."/>
            <person name="Anderson I."/>
            <person name="Liu Z."/>
            <person name="Li T."/>
            <person name="Zhao F."/>
            <person name="Overmann J."/>
            <person name="Bryant D.A."/>
            <person name="Richardson P."/>
        </authorList>
    </citation>
    <scope>NUCLEOTIDE SEQUENCE [LARGE SCALE GENOMIC DNA]</scope>
    <source>
        <strain>DSM 271 / SK 413</strain>
    </source>
</reference>
<comment type="function">
    <text evidence="1">One of the primary rRNA binding proteins, this protein initially binds near the 5'-end of the 23S rRNA. It is important during the early stages of 50S assembly. It makes multiple contacts with different domains of the 23S rRNA in the assembled 50S subunit and ribosome.</text>
</comment>
<comment type="function">
    <text evidence="1">Forms part of the polypeptide exit tunnel.</text>
</comment>
<comment type="subunit">
    <text evidence="1">Part of the 50S ribosomal subunit.</text>
</comment>
<comment type="similarity">
    <text evidence="1">Belongs to the universal ribosomal protein uL4 family.</text>
</comment>
<organism>
    <name type="scientific">Prosthecochloris aestuarii (strain DSM 271 / SK 413)</name>
    <dbReference type="NCBI Taxonomy" id="290512"/>
    <lineage>
        <taxon>Bacteria</taxon>
        <taxon>Pseudomonadati</taxon>
        <taxon>Chlorobiota</taxon>
        <taxon>Chlorobiia</taxon>
        <taxon>Chlorobiales</taxon>
        <taxon>Chlorobiaceae</taxon>
        <taxon>Prosthecochloris</taxon>
    </lineage>
</organism>
<evidence type="ECO:0000255" key="1">
    <source>
        <dbReference type="HAMAP-Rule" id="MF_01328"/>
    </source>
</evidence>
<evidence type="ECO:0000256" key="2">
    <source>
        <dbReference type="SAM" id="MobiDB-lite"/>
    </source>
</evidence>
<evidence type="ECO:0000305" key="3"/>
<feature type="chain" id="PRO_1000142168" description="Large ribosomal subunit protein uL4">
    <location>
        <begin position="1"/>
        <end position="208"/>
    </location>
</feature>
<feature type="region of interest" description="Disordered" evidence="2">
    <location>
        <begin position="45"/>
        <end position="84"/>
    </location>
</feature>
<feature type="compositionally biased region" description="Basic residues" evidence="2">
    <location>
        <begin position="60"/>
        <end position="71"/>
    </location>
</feature>